<sequence length="873" mass="95122">MSYFGEHFWGDKNHGFEVLYHCVKQGPVATKELADFIRERANIEETYSKAMAKLSKLASNGTPMGTFAPLWEVFRVSSDKLALCHLELTRKLHDLLKDVLRYGEEQLKTHKKCKEEVLGTVDAVQMLSGVGQLLPKSRENYLSRCMDLERLRRENTSQKEMDKAETKSKKAADSLRRSVDKYNSARADFEIKMLDSALRFQAMEEAHLQHMKALLGSYAHSVEDTHVQIGQVHEEFKQNVENVTVDMLLRKFAESKGTGREKPGPLDFDAYSSAALQEAMKRLRGAKAFRLPGLSRREPRASVDFLESDSGVPPEVDDEGFTVRPDISQNNGAEPPRFSSSDSDFDDEEPRKFYVHIKPAPTRAVACSSEAAAAQLRATAGSLILPPGPGGTMKRHSSRDTSGKPQRPRSAPRTGSCAEKPLASEEPLSKSLFGPPLESAFDHDDFTGSSSLGFTSSPSPFSSSSPENVEDSGLDSPSHAAPGPSPESWVPRPGTPQSPPTCRAQHPEPRGLMPRAPSPGPWGPEGGADSLTPADPTREGLAATLRRPRSRKVSCPLTRSNGDLCRSLSPSPLGSSAPTIPPDRPSFSTQMGHGISRGPSPVVLGSQDALPVATAFTEYVHAYFRGHSPSCLARVTGELTMTFPAGIVRVFSGTPPPPVLSFRLVNTAPVEHFQPNADLIFSDPSQSDPETKDFWLNMAALTEALQHQAEQNPTASYYNLVLLRYQFSRPGPESVPLQMSAHWQCGPTLTRVSVEYSYRAGATAVSTPLTNVQILLPVGEPVTSVRLQPAATWNTEEKRFTWKLPDVCEAGGSGHLSASWQPQSGPSTPSPVAAQFTSEGATLSGLDLELLGGGYRMSLVKRRFATGMYLVSC</sequence>
<accession>Q8K285</accession>
<accession>D3Z3Q5</accession>
<comment type="function">
    <text evidence="2">Functions in an early step of clathrin-mediated endocytosis. Has both a membrane binding/bending activity and the ability to recruit proteins essential to the formation of functional clathrin-coated pits. May regulate Bmp signaling by regulating clathrin-mediated endocytosis of Bmp receptors. Involved in the regulation of T-cell poliferation and activation. Affects TCR clustering upon receptor triggering and modulates its internalisation, playing a role in TCR-dependent T-cell activation.</text>
</comment>
<comment type="subunit">
    <text evidence="2 7 8">May oligomerize and form homotetramer (PubMed:21762413). Interacts with AP2A2 and AP2B1; 2 subunits of the adaptor protein complex AP-2 (PubMed:22484487). Interacts with DAB2. Interacts with clathrin (CLTC or CLTCL1). Interacts with EPS15, EPS15R and ITSN1. Interacts with AGFG1 and CALM. May interact with ACVR1; linking this receptor to clathrin-mediated endocytosis (By similarity).</text>
</comment>
<comment type="interaction">
    <interactant intactId="EBI-16078916">
        <id>Q8K285</id>
    </interactant>
    <interactant intactId="EBI-7592476">
        <id>Q9CR95</id>
        <label>Necap1</label>
    </interactant>
    <organismsDiffer>false</organismsDiffer>
    <experiments>2</experiments>
</comment>
<comment type="subcellular location">
    <subcellularLocation>
        <location evidence="2">Membrane</location>
        <location evidence="2">Clathrin-coated pit</location>
        <topology evidence="2">Peripheral membrane protein</topology>
        <orientation evidence="2">Cytoplasmic side</orientation>
    </subcellularLocation>
    <text evidence="2">Associated with forming but not mature clathrin-coated vesicles. The recruitment to coated-pits precede the one of clathrin and the adaptor protein complex AP-2. According to it may also dynamically associate with Golgi/TGN membranes.</text>
</comment>
<comment type="tissue specificity">
    <text evidence="7">Mainly detected in brain and spleen.</text>
</comment>
<comment type="similarity">
    <text evidence="9">Belongs to the FCHO family.</text>
</comment>
<organism>
    <name type="scientific">Mus musculus</name>
    <name type="common">Mouse</name>
    <dbReference type="NCBI Taxonomy" id="10090"/>
    <lineage>
        <taxon>Eukaryota</taxon>
        <taxon>Metazoa</taxon>
        <taxon>Chordata</taxon>
        <taxon>Craniata</taxon>
        <taxon>Vertebrata</taxon>
        <taxon>Euteleostomi</taxon>
        <taxon>Mammalia</taxon>
        <taxon>Eutheria</taxon>
        <taxon>Euarchontoglires</taxon>
        <taxon>Glires</taxon>
        <taxon>Rodentia</taxon>
        <taxon>Myomorpha</taxon>
        <taxon>Muroidea</taxon>
        <taxon>Muridae</taxon>
        <taxon>Murinae</taxon>
        <taxon>Mus</taxon>
        <taxon>Mus</taxon>
    </lineage>
</organism>
<dbReference type="EMBL" id="AC162033">
    <property type="status" value="NOT_ANNOTATED_CDS"/>
    <property type="molecule type" value="Genomic_DNA"/>
</dbReference>
<dbReference type="EMBL" id="BC032207">
    <property type="protein sequence ID" value="AAH32207.1"/>
    <property type="molecule type" value="mRNA"/>
</dbReference>
<dbReference type="CCDS" id="CCDS52588.1"/>
<dbReference type="RefSeq" id="NP_082991.3">
    <property type="nucleotide sequence ID" value="NM_028715.3"/>
</dbReference>
<dbReference type="RefSeq" id="XP_006509828.1">
    <property type="nucleotide sequence ID" value="XM_006509765.3"/>
</dbReference>
<dbReference type="RefSeq" id="XP_006509829.1">
    <property type="nucleotide sequence ID" value="XM_006509766.4"/>
</dbReference>
<dbReference type="RefSeq" id="XP_006509830.1">
    <property type="nucleotide sequence ID" value="XM_006509767.4"/>
</dbReference>
<dbReference type="RefSeq" id="XP_030099665.1">
    <property type="nucleotide sequence ID" value="XM_030243805.2"/>
</dbReference>
<dbReference type="SMR" id="Q8K285"/>
<dbReference type="BioGRID" id="216425">
    <property type="interactions" value="3"/>
</dbReference>
<dbReference type="DIP" id="DIP-60611N"/>
<dbReference type="FunCoup" id="Q8K285">
    <property type="interactions" value="2176"/>
</dbReference>
<dbReference type="IntAct" id="Q8K285">
    <property type="interactions" value="1"/>
</dbReference>
<dbReference type="STRING" id="10090.ENSMUSP00000091151"/>
<dbReference type="GlyGen" id="Q8K285">
    <property type="glycosylation" value="2 sites, 1 N-linked glycan (1 site)"/>
</dbReference>
<dbReference type="iPTMnet" id="Q8K285"/>
<dbReference type="PhosphoSitePlus" id="Q8K285"/>
<dbReference type="jPOST" id="Q8K285"/>
<dbReference type="PaxDb" id="10090-ENSMUSP00000117606"/>
<dbReference type="ProteomicsDB" id="271733"/>
<dbReference type="Antibodypedia" id="27790">
    <property type="antibodies" value="111 antibodies from 21 providers"/>
</dbReference>
<dbReference type="DNASU" id="74015"/>
<dbReference type="Ensembl" id="ENSMUST00000093444.13">
    <property type="protein sequence ID" value="ENSMUSP00000091151.7"/>
    <property type="gene ID" value="ENSMUSG00000070000.14"/>
</dbReference>
<dbReference type="Ensembl" id="ENSMUST00000146100.8">
    <property type="protein sequence ID" value="ENSMUSP00000117606.2"/>
    <property type="gene ID" value="ENSMUSG00000070000.14"/>
</dbReference>
<dbReference type="GeneID" id="74015"/>
<dbReference type="KEGG" id="mmu:74015"/>
<dbReference type="UCSC" id="uc033jge.1">
    <property type="organism name" value="mouse"/>
</dbReference>
<dbReference type="AGR" id="MGI:1921265"/>
<dbReference type="CTD" id="23149"/>
<dbReference type="MGI" id="MGI:1921265">
    <property type="gene designation" value="Fcho1"/>
</dbReference>
<dbReference type="VEuPathDB" id="HostDB:ENSMUSG00000070000"/>
<dbReference type="eggNOG" id="KOG2398">
    <property type="taxonomic scope" value="Eukaryota"/>
</dbReference>
<dbReference type="GeneTree" id="ENSGT00940000160489"/>
<dbReference type="HOGENOM" id="CLU_007107_0_0_1"/>
<dbReference type="InParanoid" id="Q8K285"/>
<dbReference type="OMA" id="YHAKCTE"/>
<dbReference type="OrthoDB" id="5593455at2759"/>
<dbReference type="PhylomeDB" id="Q8K285"/>
<dbReference type="TreeFam" id="TF328986"/>
<dbReference type="Reactome" id="R-MMU-8856825">
    <property type="pathway name" value="Cargo recognition for clathrin-mediated endocytosis"/>
</dbReference>
<dbReference type="Reactome" id="R-MMU-8856828">
    <property type="pathway name" value="Clathrin-mediated endocytosis"/>
</dbReference>
<dbReference type="BioGRID-ORCS" id="74015">
    <property type="hits" value="3 hits in 79 CRISPR screens"/>
</dbReference>
<dbReference type="PRO" id="PR:Q8K285"/>
<dbReference type="Proteomes" id="UP000000589">
    <property type="component" value="Chromosome 8"/>
</dbReference>
<dbReference type="RNAct" id="Q8K285">
    <property type="molecule type" value="protein"/>
</dbReference>
<dbReference type="Bgee" id="ENSMUSG00000070000">
    <property type="expression patterns" value="Expressed in embryonic brain and 153 other cell types or tissues"/>
</dbReference>
<dbReference type="ExpressionAtlas" id="Q8K285">
    <property type="expression patterns" value="baseline and differential"/>
</dbReference>
<dbReference type="GO" id="GO:0005905">
    <property type="term" value="C:clathrin-coated pit"/>
    <property type="evidence" value="ECO:0000266"/>
    <property type="project" value="MGI"/>
</dbReference>
<dbReference type="GO" id="GO:0005829">
    <property type="term" value="C:cytosol"/>
    <property type="evidence" value="ECO:0007669"/>
    <property type="project" value="Ensembl"/>
</dbReference>
<dbReference type="GO" id="GO:0005654">
    <property type="term" value="C:nucleoplasm"/>
    <property type="evidence" value="ECO:0007669"/>
    <property type="project" value="Ensembl"/>
</dbReference>
<dbReference type="GO" id="GO:0005886">
    <property type="term" value="C:plasma membrane"/>
    <property type="evidence" value="ECO:0000250"/>
    <property type="project" value="UniProtKB"/>
</dbReference>
<dbReference type="GO" id="GO:0098843">
    <property type="term" value="C:postsynaptic endocytic zone"/>
    <property type="evidence" value="ECO:0007669"/>
    <property type="project" value="Ensembl"/>
</dbReference>
<dbReference type="GO" id="GO:0035612">
    <property type="term" value="F:AP-2 adaptor complex binding"/>
    <property type="evidence" value="ECO:0000266"/>
    <property type="project" value="MGI"/>
</dbReference>
<dbReference type="GO" id="GO:0048268">
    <property type="term" value="P:clathrin coat assembly"/>
    <property type="evidence" value="ECO:0000250"/>
    <property type="project" value="UniProtKB"/>
</dbReference>
<dbReference type="GO" id="GO:0072583">
    <property type="term" value="P:clathrin-dependent endocytosis"/>
    <property type="evidence" value="ECO:0000250"/>
    <property type="project" value="UniProtKB"/>
</dbReference>
<dbReference type="GO" id="GO:0050870">
    <property type="term" value="P:positive regulation of T cell activation"/>
    <property type="evidence" value="ECO:0000250"/>
    <property type="project" value="UniProtKB"/>
</dbReference>
<dbReference type="GO" id="GO:0050852">
    <property type="term" value="P:T cell receptor signaling pathway"/>
    <property type="evidence" value="ECO:0000250"/>
    <property type="project" value="UniProtKB"/>
</dbReference>
<dbReference type="CDD" id="cd07674">
    <property type="entry name" value="F-BAR_FCHO1"/>
    <property type="match status" value="1"/>
</dbReference>
<dbReference type="FunFam" id="1.20.1270.60:FF:000016">
    <property type="entry name" value="FCH domain only protein 2"/>
    <property type="match status" value="1"/>
</dbReference>
<dbReference type="Gene3D" id="1.20.1270.60">
    <property type="entry name" value="Arfaptin homology (AH) domain/BAR domain"/>
    <property type="match status" value="1"/>
</dbReference>
<dbReference type="Gene3D" id="2.60.40.1170">
    <property type="entry name" value="Mu homology domain, subdomain B"/>
    <property type="match status" value="2"/>
</dbReference>
<dbReference type="InterPro" id="IPR027267">
    <property type="entry name" value="AH/BAR_dom_sf"/>
</dbReference>
<dbReference type="InterPro" id="IPR031160">
    <property type="entry name" value="F_BAR"/>
</dbReference>
<dbReference type="InterPro" id="IPR001060">
    <property type="entry name" value="FCH_dom"/>
</dbReference>
<dbReference type="InterPro" id="IPR042735">
    <property type="entry name" value="FCHO1_F-BAR"/>
</dbReference>
<dbReference type="InterPro" id="IPR054713">
    <property type="entry name" value="GMIP/FCHO2-like_FCH"/>
</dbReference>
<dbReference type="InterPro" id="IPR028565">
    <property type="entry name" value="MHD"/>
</dbReference>
<dbReference type="InterPro" id="IPR018808">
    <property type="entry name" value="Muniscin_C"/>
</dbReference>
<dbReference type="PANTHER" id="PTHR23065:SF6">
    <property type="entry name" value="F-BAR DOMAIN ONLY PROTEIN 1"/>
    <property type="match status" value="1"/>
</dbReference>
<dbReference type="PANTHER" id="PTHR23065">
    <property type="entry name" value="PROLINE-SERINE-THREONINE PHOSPHATASE INTERACTING PROTEIN 1"/>
    <property type="match status" value="1"/>
</dbReference>
<dbReference type="Pfam" id="PF22699">
    <property type="entry name" value="GMIP-like_FCH"/>
    <property type="match status" value="1"/>
</dbReference>
<dbReference type="Pfam" id="PF10291">
    <property type="entry name" value="muHD"/>
    <property type="match status" value="1"/>
</dbReference>
<dbReference type="SMART" id="SM00055">
    <property type="entry name" value="FCH"/>
    <property type="match status" value="1"/>
</dbReference>
<dbReference type="SUPFAM" id="SSF103657">
    <property type="entry name" value="BAR/IMD domain-like"/>
    <property type="match status" value="1"/>
</dbReference>
<dbReference type="PROSITE" id="PS51741">
    <property type="entry name" value="F_BAR"/>
    <property type="match status" value="1"/>
</dbReference>
<dbReference type="PROSITE" id="PS51072">
    <property type="entry name" value="MHD"/>
    <property type="match status" value="1"/>
</dbReference>
<reference key="1">
    <citation type="journal article" date="2009" name="PLoS Biol.">
        <title>Lineage-specific biology revealed by a finished genome assembly of the mouse.</title>
        <authorList>
            <person name="Church D.M."/>
            <person name="Goodstadt L."/>
            <person name="Hillier L.W."/>
            <person name="Zody M.C."/>
            <person name="Goldstein S."/>
            <person name="She X."/>
            <person name="Bult C.J."/>
            <person name="Agarwala R."/>
            <person name="Cherry J.L."/>
            <person name="DiCuccio M."/>
            <person name="Hlavina W."/>
            <person name="Kapustin Y."/>
            <person name="Meric P."/>
            <person name="Maglott D."/>
            <person name="Birtle Z."/>
            <person name="Marques A.C."/>
            <person name="Graves T."/>
            <person name="Zhou S."/>
            <person name="Teague B."/>
            <person name="Potamousis K."/>
            <person name="Churas C."/>
            <person name="Place M."/>
            <person name="Herschleb J."/>
            <person name="Runnheim R."/>
            <person name="Forrest D."/>
            <person name="Amos-Landgraf J."/>
            <person name="Schwartz D.C."/>
            <person name="Cheng Z."/>
            <person name="Lindblad-Toh K."/>
            <person name="Eichler E.E."/>
            <person name="Ponting C.P."/>
        </authorList>
    </citation>
    <scope>NUCLEOTIDE SEQUENCE [LARGE SCALE GENOMIC DNA]</scope>
    <source>
        <strain>C57BL/6J</strain>
    </source>
</reference>
<reference key="2">
    <citation type="journal article" date="2004" name="Genome Res.">
        <title>The status, quality, and expansion of the NIH full-length cDNA project: the Mammalian Gene Collection (MGC).</title>
        <authorList>
            <consortium name="The MGC Project Team"/>
        </authorList>
    </citation>
    <scope>NUCLEOTIDE SEQUENCE [LARGE SCALE MRNA]</scope>
    <source>
        <strain>FVB/N</strain>
        <tissue>Mammary tumor</tissue>
    </source>
</reference>
<reference key="3">
    <citation type="journal article" date="2010" name="Cell">
        <title>A tissue-specific atlas of mouse protein phosphorylation and expression.</title>
        <authorList>
            <person name="Huttlin E.L."/>
            <person name="Jedrychowski M.P."/>
            <person name="Elias J.E."/>
            <person name="Goswami T."/>
            <person name="Rad R."/>
            <person name="Beausoleil S.A."/>
            <person name="Villen J."/>
            <person name="Haas W."/>
            <person name="Sowa M.E."/>
            <person name="Gygi S.P."/>
        </authorList>
    </citation>
    <scope>PHOSPHORYLATION [LARGE SCALE ANALYSIS] AT SER-518</scope>
    <scope>IDENTIFICATION BY MASS SPECTROMETRY [LARGE SCALE ANALYSIS]</scope>
    <source>
        <tissue>Brain</tissue>
        <tissue>Lung</tissue>
        <tissue>Spleen</tissue>
    </source>
</reference>
<reference key="4">
    <citation type="journal article" date="2011" name="Genes Cells">
        <title>Characterization of the EFC/F-BAR domain protein, FCHO2.</title>
        <authorList>
            <person name="Uezu A."/>
            <person name="Umeda K."/>
            <person name="Tsujita K."/>
            <person name="Suetsugu S."/>
            <person name="Takenawa T."/>
            <person name="Nakanishi H."/>
        </authorList>
    </citation>
    <scope>TISSUE SPECIFICITY</scope>
    <scope>OLIGOMERIZATION</scope>
</reference>
<reference key="5">
    <citation type="journal article" date="2012" name="Nat. Cell Biol.">
        <title>Distinct and separable activities of the endocytic clathrin-coat components Fcho1/2 and AP-2 in developmental patterning.</title>
        <authorList>
            <person name="Umasankar P.K."/>
            <person name="Sanker S."/>
            <person name="Thieman J.R."/>
            <person name="Chakraborty S."/>
            <person name="Wendland B."/>
            <person name="Tsang M."/>
            <person name="Traub L.M."/>
        </authorList>
    </citation>
    <scope>INTERACTION WITH AP2A2 AND AP2B1</scope>
</reference>
<gene>
    <name evidence="10" type="primary">Fcho1</name>
</gene>
<evidence type="ECO:0000250" key="1"/>
<evidence type="ECO:0000250" key="2">
    <source>
        <dbReference type="UniProtKB" id="O14526"/>
    </source>
</evidence>
<evidence type="ECO:0000255" key="3"/>
<evidence type="ECO:0000255" key="4">
    <source>
        <dbReference type="PROSITE-ProRule" id="PRU00404"/>
    </source>
</evidence>
<evidence type="ECO:0000255" key="5">
    <source>
        <dbReference type="PROSITE-ProRule" id="PRU01077"/>
    </source>
</evidence>
<evidence type="ECO:0000256" key="6">
    <source>
        <dbReference type="SAM" id="MobiDB-lite"/>
    </source>
</evidence>
<evidence type="ECO:0000269" key="7">
    <source>
    </source>
</evidence>
<evidence type="ECO:0000269" key="8">
    <source>
    </source>
</evidence>
<evidence type="ECO:0000305" key="9"/>
<evidence type="ECO:0000312" key="10">
    <source>
        <dbReference type="MGI" id="MGI:1921265"/>
    </source>
</evidence>
<evidence type="ECO:0007744" key="11">
    <source>
    </source>
</evidence>
<keyword id="KW-0168">Coated pit</keyword>
<keyword id="KW-0175">Coiled coil</keyword>
<keyword id="KW-0254">Endocytosis</keyword>
<keyword id="KW-0472">Membrane</keyword>
<keyword id="KW-0597">Phosphoprotein</keyword>
<keyword id="KW-1185">Reference proteome</keyword>
<proteinExistence type="evidence at protein level"/>
<name>FCHO1_MOUSE</name>
<feature type="chain" id="PRO_0000271760" description="F-BAR domain only protein 1">
    <location>
        <begin position="1"/>
        <end position="873"/>
    </location>
</feature>
<feature type="domain" description="F-BAR" evidence="5">
    <location>
        <begin position="1"/>
        <end position="248"/>
    </location>
</feature>
<feature type="domain" description="MHD" evidence="4">
    <location>
        <begin position="609"/>
        <end position="872"/>
    </location>
</feature>
<feature type="region of interest" description="Mediates membrane-binding" evidence="1">
    <location>
        <begin position="1"/>
        <end position="275"/>
    </location>
</feature>
<feature type="region of interest" description="Disordered" evidence="6">
    <location>
        <begin position="153"/>
        <end position="172"/>
    </location>
</feature>
<feature type="region of interest" description="Mediates interaction with the adaptor protein complex AP-2" evidence="1">
    <location>
        <begin position="267"/>
        <end position="439"/>
    </location>
</feature>
<feature type="region of interest" description="Disordered" evidence="6">
    <location>
        <begin position="302"/>
        <end position="347"/>
    </location>
</feature>
<feature type="region of interest" description="Disordered" evidence="6">
    <location>
        <begin position="381"/>
        <end position="600"/>
    </location>
</feature>
<feature type="region of interest" description="Mediates interaction with AGFG1, CALM, DAB2, EPS15, EPS15R, ITSN1 and clathrin" evidence="1">
    <location>
        <begin position="593"/>
        <end position="873"/>
    </location>
</feature>
<feature type="region of interest" description="Disordered" evidence="6">
    <location>
        <begin position="813"/>
        <end position="833"/>
    </location>
</feature>
<feature type="coiled-coil region" evidence="3">
    <location>
        <begin position="155"/>
        <end position="178"/>
    </location>
</feature>
<feature type="compositionally biased region" description="Low complexity" evidence="6">
    <location>
        <begin position="447"/>
        <end position="466"/>
    </location>
</feature>
<feature type="compositionally biased region" description="Low complexity" evidence="6">
    <location>
        <begin position="567"/>
        <end position="576"/>
    </location>
</feature>
<feature type="compositionally biased region" description="Polar residues" evidence="6">
    <location>
        <begin position="816"/>
        <end position="827"/>
    </location>
</feature>
<feature type="modified residue" description="Phosphoserine" evidence="2">
    <location>
        <position position="295"/>
    </location>
</feature>
<feature type="modified residue" description="Phosphoserine" evidence="2">
    <location>
        <position position="343"/>
    </location>
</feature>
<feature type="modified residue" description="Phosphoserine" evidence="2">
    <location>
        <position position="368"/>
    </location>
</feature>
<feature type="modified residue" description="Phosphoserine" evidence="11">
    <location>
        <position position="518"/>
    </location>
</feature>
<feature type="modified residue" description="Phosphoserine" evidence="2">
    <location>
        <position position="600"/>
    </location>
</feature>
<feature type="sequence conflict" description="In Ref. 2; AAH32207." evidence="9" ref="2">
    <original>A</original>
    <variation>T</variation>
    <location>
        <position position="609"/>
    </location>
</feature>
<protein>
    <recommendedName>
        <fullName evidence="9">F-BAR domain only protein 1</fullName>
    </recommendedName>
</protein>